<gene>
    <name evidence="1" type="primary">dnaJ2</name>
    <name type="ordered locus">AZOSEA27120</name>
    <name type="ORF">ebA4793</name>
</gene>
<organism>
    <name type="scientific">Aromatoleum aromaticum (strain DSM 19018 / LMG 30748 / EbN1)</name>
    <name type="common">Azoarcus sp. (strain EbN1)</name>
    <dbReference type="NCBI Taxonomy" id="76114"/>
    <lineage>
        <taxon>Bacteria</taxon>
        <taxon>Pseudomonadati</taxon>
        <taxon>Pseudomonadota</taxon>
        <taxon>Betaproteobacteria</taxon>
        <taxon>Rhodocyclales</taxon>
        <taxon>Rhodocyclaceae</taxon>
        <taxon>Aromatoleum</taxon>
    </lineage>
</organism>
<accession>Q5P1H7</accession>
<protein>
    <recommendedName>
        <fullName evidence="1">Chaperone protein DnaJ 2</fullName>
    </recommendedName>
</protein>
<name>DNAJ2_AROAE</name>
<reference key="1">
    <citation type="journal article" date="2005" name="Arch. Microbiol.">
        <title>The genome sequence of an anaerobic aromatic-degrading denitrifying bacterium, strain EbN1.</title>
        <authorList>
            <person name="Rabus R."/>
            <person name="Kube M."/>
            <person name="Heider J."/>
            <person name="Beck A."/>
            <person name="Heitmann K."/>
            <person name="Widdel F."/>
            <person name="Reinhardt R."/>
        </authorList>
    </citation>
    <scope>NUCLEOTIDE SEQUENCE [LARGE SCALE GENOMIC DNA]</scope>
    <source>
        <strain>DSM 19018 / LMG 30748 / EbN1</strain>
    </source>
</reference>
<dbReference type="EMBL" id="CR555306">
    <property type="protein sequence ID" value="CAI08837.1"/>
    <property type="molecule type" value="Genomic_DNA"/>
</dbReference>
<dbReference type="RefSeq" id="WP_011238520.1">
    <property type="nucleotide sequence ID" value="NC_006513.1"/>
</dbReference>
<dbReference type="SMR" id="Q5P1H7"/>
<dbReference type="STRING" id="76114.ebA4793"/>
<dbReference type="KEGG" id="eba:ebA4793"/>
<dbReference type="eggNOG" id="COG0484">
    <property type="taxonomic scope" value="Bacteria"/>
</dbReference>
<dbReference type="HOGENOM" id="CLU_017633_0_7_4"/>
<dbReference type="OrthoDB" id="9779889at2"/>
<dbReference type="Proteomes" id="UP000006552">
    <property type="component" value="Chromosome"/>
</dbReference>
<dbReference type="GO" id="GO:0005737">
    <property type="term" value="C:cytoplasm"/>
    <property type="evidence" value="ECO:0007669"/>
    <property type="project" value="UniProtKB-SubCell"/>
</dbReference>
<dbReference type="GO" id="GO:0005524">
    <property type="term" value="F:ATP binding"/>
    <property type="evidence" value="ECO:0007669"/>
    <property type="project" value="InterPro"/>
</dbReference>
<dbReference type="GO" id="GO:0031072">
    <property type="term" value="F:heat shock protein binding"/>
    <property type="evidence" value="ECO:0007669"/>
    <property type="project" value="InterPro"/>
</dbReference>
<dbReference type="GO" id="GO:0051082">
    <property type="term" value="F:unfolded protein binding"/>
    <property type="evidence" value="ECO:0007669"/>
    <property type="project" value="UniProtKB-UniRule"/>
</dbReference>
<dbReference type="GO" id="GO:0008270">
    <property type="term" value="F:zinc ion binding"/>
    <property type="evidence" value="ECO:0007669"/>
    <property type="project" value="UniProtKB-UniRule"/>
</dbReference>
<dbReference type="GO" id="GO:0051085">
    <property type="term" value="P:chaperone cofactor-dependent protein refolding"/>
    <property type="evidence" value="ECO:0007669"/>
    <property type="project" value="TreeGrafter"/>
</dbReference>
<dbReference type="GO" id="GO:0006260">
    <property type="term" value="P:DNA replication"/>
    <property type="evidence" value="ECO:0007669"/>
    <property type="project" value="UniProtKB-KW"/>
</dbReference>
<dbReference type="GO" id="GO:0042026">
    <property type="term" value="P:protein refolding"/>
    <property type="evidence" value="ECO:0007669"/>
    <property type="project" value="TreeGrafter"/>
</dbReference>
<dbReference type="GO" id="GO:0009408">
    <property type="term" value="P:response to heat"/>
    <property type="evidence" value="ECO:0007669"/>
    <property type="project" value="InterPro"/>
</dbReference>
<dbReference type="CDD" id="cd06257">
    <property type="entry name" value="DnaJ"/>
    <property type="match status" value="1"/>
</dbReference>
<dbReference type="CDD" id="cd10747">
    <property type="entry name" value="DnaJ_C"/>
    <property type="match status" value="1"/>
</dbReference>
<dbReference type="CDD" id="cd10719">
    <property type="entry name" value="DnaJ_zf"/>
    <property type="match status" value="1"/>
</dbReference>
<dbReference type="FunFam" id="1.10.287.110:FF:000034">
    <property type="entry name" value="Chaperone protein DnaJ"/>
    <property type="match status" value="1"/>
</dbReference>
<dbReference type="FunFam" id="2.10.230.10:FF:000002">
    <property type="entry name" value="Molecular chaperone DnaJ"/>
    <property type="match status" value="1"/>
</dbReference>
<dbReference type="FunFam" id="2.60.260.20:FF:000004">
    <property type="entry name" value="Molecular chaperone DnaJ"/>
    <property type="match status" value="1"/>
</dbReference>
<dbReference type="Gene3D" id="1.10.287.110">
    <property type="entry name" value="DnaJ domain"/>
    <property type="match status" value="1"/>
</dbReference>
<dbReference type="Gene3D" id="2.10.230.10">
    <property type="entry name" value="Heat shock protein DnaJ, cysteine-rich domain"/>
    <property type="match status" value="1"/>
</dbReference>
<dbReference type="Gene3D" id="2.60.260.20">
    <property type="entry name" value="Urease metallochaperone UreE, N-terminal domain"/>
    <property type="match status" value="2"/>
</dbReference>
<dbReference type="HAMAP" id="MF_01152">
    <property type="entry name" value="DnaJ"/>
    <property type="match status" value="1"/>
</dbReference>
<dbReference type="InterPro" id="IPR012724">
    <property type="entry name" value="DnaJ"/>
</dbReference>
<dbReference type="InterPro" id="IPR002939">
    <property type="entry name" value="DnaJ_C"/>
</dbReference>
<dbReference type="InterPro" id="IPR001623">
    <property type="entry name" value="DnaJ_domain"/>
</dbReference>
<dbReference type="InterPro" id="IPR018253">
    <property type="entry name" value="DnaJ_domain_CS"/>
</dbReference>
<dbReference type="InterPro" id="IPR008971">
    <property type="entry name" value="HSP40/DnaJ_pept-bd"/>
</dbReference>
<dbReference type="InterPro" id="IPR001305">
    <property type="entry name" value="HSP_DnaJ_Cys-rich_dom"/>
</dbReference>
<dbReference type="InterPro" id="IPR036410">
    <property type="entry name" value="HSP_DnaJ_Cys-rich_dom_sf"/>
</dbReference>
<dbReference type="InterPro" id="IPR036869">
    <property type="entry name" value="J_dom_sf"/>
</dbReference>
<dbReference type="NCBIfam" id="TIGR02349">
    <property type="entry name" value="DnaJ_bact"/>
    <property type="match status" value="1"/>
</dbReference>
<dbReference type="NCBIfam" id="NF008035">
    <property type="entry name" value="PRK10767.1"/>
    <property type="match status" value="1"/>
</dbReference>
<dbReference type="PANTHER" id="PTHR43096:SF48">
    <property type="entry name" value="CHAPERONE PROTEIN DNAJ"/>
    <property type="match status" value="1"/>
</dbReference>
<dbReference type="PANTHER" id="PTHR43096">
    <property type="entry name" value="DNAJ HOMOLOG 1, MITOCHONDRIAL-RELATED"/>
    <property type="match status" value="1"/>
</dbReference>
<dbReference type="Pfam" id="PF00226">
    <property type="entry name" value="DnaJ"/>
    <property type="match status" value="1"/>
</dbReference>
<dbReference type="Pfam" id="PF01556">
    <property type="entry name" value="DnaJ_C"/>
    <property type="match status" value="1"/>
</dbReference>
<dbReference type="Pfam" id="PF00684">
    <property type="entry name" value="DnaJ_CXXCXGXG"/>
    <property type="match status" value="1"/>
</dbReference>
<dbReference type="PRINTS" id="PR00625">
    <property type="entry name" value="JDOMAIN"/>
</dbReference>
<dbReference type="SMART" id="SM00271">
    <property type="entry name" value="DnaJ"/>
    <property type="match status" value="1"/>
</dbReference>
<dbReference type="SUPFAM" id="SSF46565">
    <property type="entry name" value="Chaperone J-domain"/>
    <property type="match status" value="1"/>
</dbReference>
<dbReference type="SUPFAM" id="SSF57938">
    <property type="entry name" value="DnaJ/Hsp40 cysteine-rich domain"/>
    <property type="match status" value="1"/>
</dbReference>
<dbReference type="SUPFAM" id="SSF49493">
    <property type="entry name" value="HSP40/DnaJ peptide-binding domain"/>
    <property type="match status" value="2"/>
</dbReference>
<dbReference type="PROSITE" id="PS00636">
    <property type="entry name" value="DNAJ_1"/>
    <property type="match status" value="1"/>
</dbReference>
<dbReference type="PROSITE" id="PS50076">
    <property type="entry name" value="DNAJ_2"/>
    <property type="match status" value="1"/>
</dbReference>
<dbReference type="PROSITE" id="PS51188">
    <property type="entry name" value="ZF_CR"/>
    <property type="match status" value="1"/>
</dbReference>
<comment type="function">
    <text evidence="1">Participates actively in the response to hyperosmotic and heat shock by preventing the aggregation of stress-denatured proteins and by disaggregating proteins, also in an autonomous, DnaK-independent fashion. Unfolded proteins bind initially to DnaJ; upon interaction with the DnaJ-bound protein, DnaK hydrolyzes its bound ATP, resulting in the formation of a stable complex. GrpE releases ADP from DnaK; ATP binding to DnaK triggers the release of the substrate protein, thus completing the reaction cycle. Several rounds of ATP-dependent interactions between DnaJ, DnaK and GrpE are required for fully efficient folding. Also involved, together with DnaK and GrpE, in the DNA replication of plasmids through activation of initiation proteins.</text>
</comment>
<comment type="cofactor">
    <cofactor evidence="1">
        <name>Zn(2+)</name>
        <dbReference type="ChEBI" id="CHEBI:29105"/>
    </cofactor>
    <text evidence="1">Binds 2 Zn(2+) ions per monomer.</text>
</comment>
<comment type="subunit">
    <text evidence="1">Homodimer.</text>
</comment>
<comment type="subcellular location">
    <subcellularLocation>
        <location evidence="1">Cytoplasm</location>
    </subcellularLocation>
</comment>
<comment type="domain">
    <text evidence="1">The J domain is necessary and sufficient to stimulate DnaK ATPase activity. Zinc center 1 plays an important role in the autonomous, DnaK-independent chaperone activity of DnaJ. Zinc center 2 is essential for interaction with DnaK and for DnaJ activity.</text>
</comment>
<comment type="similarity">
    <text evidence="1">Belongs to the DnaJ family.</text>
</comment>
<sequence>MAKRDYYEVLGVNRDASDNEIKKAYRKLAMKHHPDRNPDNKDSEDHFKEAKNAYEILSDAQKRAAYDRYGHAGVDPSAGAGPGGQGFDGFADAFSDIFGDIFGGAGGAGRGRSNVYRGADLRYNLEISLEEAARGADKTIRIPTVEECETCHGSGAKPGTQPKPCPTCGGAGQVRIQQGFFSIQQTCPKCHGTGRIIPDPCRDCGGAGRVKRQKTLEVKIPAGIDEGMRLRHAGHGEPGVNGGPPGDLYVEIHIRAHPVFQRDHDDLHCEMPISITTAALGGEIEIPTLEGMARLKIPAETQSGKVFRLRGKGIRNVRSQAHGDLMCHVVVETPVNLTERQKELLREFEEVSSSDADRHNPKAKSWMDKVKDFFGA</sequence>
<evidence type="ECO:0000255" key="1">
    <source>
        <dbReference type="HAMAP-Rule" id="MF_01152"/>
    </source>
</evidence>
<keyword id="KW-0143">Chaperone</keyword>
<keyword id="KW-0963">Cytoplasm</keyword>
<keyword id="KW-0235">DNA replication</keyword>
<keyword id="KW-0479">Metal-binding</keyword>
<keyword id="KW-1185">Reference proteome</keyword>
<keyword id="KW-0677">Repeat</keyword>
<keyword id="KW-0346">Stress response</keyword>
<keyword id="KW-0862">Zinc</keyword>
<keyword id="KW-0863">Zinc-finger</keyword>
<proteinExistence type="inferred from homology"/>
<feature type="chain" id="PRO_0000070714" description="Chaperone protein DnaJ 2">
    <location>
        <begin position="1"/>
        <end position="376"/>
    </location>
</feature>
<feature type="domain" description="J" evidence="1">
    <location>
        <begin position="5"/>
        <end position="70"/>
    </location>
</feature>
<feature type="repeat" description="CXXCXGXG motif">
    <location>
        <begin position="148"/>
        <end position="155"/>
    </location>
</feature>
<feature type="repeat" description="CXXCXGXG motif">
    <location>
        <begin position="165"/>
        <end position="172"/>
    </location>
</feature>
<feature type="repeat" description="CXXCXGXG motif">
    <location>
        <begin position="187"/>
        <end position="194"/>
    </location>
</feature>
<feature type="repeat" description="CXXCXGXG motif">
    <location>
        <begin position="201"/>
        <end position="208"/>
    </location>
</feature>
<feature type="zinc finger region" description="CR-type" evidence="1">
    <location>
        <begin position="135"/>
        <end position="213"/>
    </location>
</feature>
<feature type="binding site" evidence="1">
    <location>
        <position position="148"/>
    </location>
    <ligand>
        <name>Zn(2+)</name>
        <dbReference type="ChEBI" id="CHEBI:29105"/>
        <label>1</label>
    </ligand>
</feature>
<feature type="binding site" evidence="1">
    <location>
        <position position="151"/>
    </location>
    <ligand>
        <name>Zn(2+)</name>
        <dbReference type="ChEBI" id="CHEBI:29105"/>
        <label>1</label>
    </ligand>
</feature>
<feature type="binding site" evidence="1">
    <location>
        <position position="165"/>
    </location>
    <ligand>
        <name>Zn(2+)</name>
        <dbReference type="ChEBI" id="CHEBI:29105"/>
        <label>2</label>
    </ligand>
</feature>
<feature type="binding site" evidence="1">
    <location>
        <position position="168"/>
    </location>
    <ligand>
        <name>Zn(2+)</name>
        <dbReference type="ChEBI" id="CHEBI:29105"/>
        <label>2</label>
    </ligand>
</feature>
<feature type="binding site" evidence="1">
    <location>
        <position position="187"/>
    </location>
    <ligand>
        <name>Zn(2+)</name>
        <dbReference type="ChEBI" id="CHEBI:29105"/>
        <label>2</label>
    </ligand>
</feature>
<feature type="binding site" evidence="1">
    <location>
        <position position="190"/>
    </location>
    <ligand>
        <name>Zn(2+)</name>
        <dbReference type="ChEBI" id="CHEBI:29105"/>
        <label>2</label>
    </ligand>
</feature>
<feature type="binding site" evidence="1">
    <location>
        <position position="201"/>
    </location>
    <ligand>
        <name>Zn(2+)</name>
        <dbReference type="ChEBI" id="CHEBI:29105"/>
        <label>1</label>
    </ligand>
</feature>
<feature type="binding site" evidence="1">
    <location>
        <position position="204"/>
    </location>
    <ligand>
        <name>Zn(2+)</name>
        <dbReference type="ChEBI" id="CHEBI:29105"/>
        <label>1</label>
    </ligand>
</feature>